<accession>A5VQY5</accession>
<name>KAD_BRUO2</name>
<reference key="1">
    <citation type="journal article" date="2009" name="PLoS ONE">
        <title>Genome degradation in Brucella ovis corresponds with narrowing of its host range and tissue tropism.</title>
        <authorList>
            <person name="Tsolis R.M."/>
            <person name="Seshadri R."/>
            <person name="Santos R.L."/>
            <person name="Sangari F.J."/>
            <person name="Lobo J.M."/>
            <person name="de Jong M.F."/>
            <person name="Ren Q."/>
            <person name="Myers G."/>
            <person name="Brinkac L.M."/>
            <person name="Nelson W.C."/>
            <person name="Deboy R.T."/>
            <person name="Angiuoli S."/>
            <person name="Khouri H."/>
            <person name="Dimitrov G."/>
            <person name="Robinson J.R."/>
            <person name="Mulligan S."/>
            <person name="Walker R.L."/>
            <person name="Elzer P.E."/>
            <person name="Hassan K.A."/>
            <person name="Paulsen I.T."/>
        </authorList>
    </citation>
    <scope>NUCLEOTIDE SEQUENCE [LARGE SCALE GENOMIC DNA]</scope>
    <source>
        <strain>ATCC 25840 / 63/290 / NCTC 10512</strain>
    </source>
</reference>
<comment type="function">
    <text evidence="1">Catalyzes the reversible transfer of the terminal phosphate group between ATP and AMP. Plays an important role in cellular energy homeostasis and in adenine nucleotide metabolism.</text>
</comment>
<comment type="catalytic activity">
    <reaction evidence="1">
        <text>AMP + ATP = 2 ADP</text>
        <dbReference type="Rhea" id="RHEA:12973"/>
        <dbReference type="ChEBI" id="CHEBI:30616"/>
        <dbReference type="ChEBI" id="CHEBI:456215"/>
        <dbReference type="ChEBI" id="CHEBI:456216"/>
        <dbReference type="EC" id="2.7.4.3"/>
    </reaction>
</comment>
<comment type="pathway">
    <text evidence="1">Purine metabolism; AMP biosynthesis via salvage pathway; AMP from ADP: step 1/1.</text>
</comment>
<comment type="subunit">
    <text evidence="1">Monomer.</text>
</comment>
<comment type="subcellular location">
    <subcellularLocation>
        <location evidence="1">Cytoplasm</location>
    </subcellularLocation>
</comment>
<comment type="domain">
    <text evidence="1">Consists of three domains, a large central CORE domain and two small peripheral domains, NMPbind and LID, which undergo movements during catalysis. The LID domain closes over the site of phosphoryl transfer upon ATP binding. Assembling and dissambling the active center during each catalytic cycle provides an effective means to prevent ATP hydrolysis.</text>
</comment>
<comment type="similarity">
    <text evidence="1">Belongs to the adenylate kinase family.</text>
</comment>
<proteinExistence type="inferred from homology"/>
<dbReference type="EC" id="2.7.4.3" evidence="1"/>
<dbReference type="EMBL" id="CP000708">
    <property type="protein sequence ID" value="ABQ60175.1"/>
    <property type="molecule type" value="Genomic_DNA"/>
</dbReference>
<dbReference type="RefSeq" id="WP_004689762.1">
    <property type="nucleotide sequence ID" value="NC_009505.1"/>
</dbReference>
<dbReference type="SMR" id="A5VQY5"/>
<dbReference type="KEGG" id="bov:BOV_1175"/>
<dbReference type="HOGENOM" id="CLU_032354_4_1_5"/>
<dbReference type="PhylomeDB" id="A5VQY5"/>
<dbReference type="UniPathway" id="UPA00588">
    <property type="reaction ID" value="UER00649"/>
</dbReference>
<dbReference type="Proteomes" id="UP000006383">
    <property type="component" value="Chromosome I"/>
</dbReference>
<dbReference type="GO" id="GO:0005737">
    <property type="term" value="C:cytoplasm"/>
    <property type="evidence" value="ECO:0007669"/>
    <property type="project" value="UniProtKB-SubCell"/>
</dbReference>
<dbReference type="GO" id="GO:0004017">
    <property type="term" value="F:adenylate kinase activity"/>
    <property type="evidence" value="ECO:0007669"/>
    <property type="project" value="UniProtKB-UniRule"/>
</dbReference>
<dbReference type="GO" id="GO:0005524">
    <property type="term" value="F:ATP binding"/>
    <property type="evidence" value="ECO:0007669"/>
    <property type="project" value="UniProtKB-UniRule"/>
</dbReference>
<dbReference type="GO" id="GO:0044209">
    <property type="term" value="P:AMP salvage"/>
    <property type="evidence" value="ECO:0007669"/>
    <property type="project" value="UniProtKB-UniRule"/>
</dbReference>
<dbReference type="CDD" id="cd01428">
    <property type="entry name" value="ADK"/>
    <property type="match status" value="1"/>
</dbReference>
<dbReference type="Gene3D" id="3.40.50.300">
    <property type="entry name" value="P-loop containing nucleotide triphosphate hydrolases"/>
    <property type="match status" value="1"/>
</dbReference>
<dbReference type="HAMAP" id="MF_00235">
    <property type="entry name" value="Adenylate_kinase_Adk"/>
    <property type="match status" value="1"/>
</dbReference>
<dbReference type="InterPro" id="IPR006259">
    <property type="entry name" value="Adenyl_kin_sub"/>
</dbReference>
<dbReference type="InterPro" id="IPR000850">
    <property type="entry name" value="Adenylat/UMP-CMP_kin"/>
</dbReference>
<dbReference type="InterPro" id="IPR033690">
    <property type="entry name" value="Adenylat_kinase_CS"/>
</dbReference>
<dbReference type="InterPro" id="IPR027417">
    <property type="entry name" value="P-loop_NTPase"/>
</dbReference>
<dbReference type="NCBIfam" id="TIGR01351">
    <property type="entry name" value="adk"/>
    <property type="match status" value="1"/>
</dbReference>
<dbReference type="NCBIfam" id="NF001381">
    <property type="entry name" value="PRK00279.1-3"/>
    <property type="match status" value="1"/>
</dbReference>
<dbReference type="NCBIfam" id="NF011100">
    <property type="entry name" value="PRK14527.1"/>
    <property type="match status" value="1"/>
</dbReference>
<dbReference type="NCBIfam" id="NF011101">
    <property type="entry name" value="PRK14528.1"/>
    <property type="match status" value="1"/>
</dbReference>
<dbReference type="NCBIfam" id="NF011104">
    <property type="entry name" value="PRK14531.1"/>
    <property type="match status" value="1"/>
</dbReference>
<dbReference type="NCBIfam" id="NF011105">
    <property type="entry name" value="PRK14532.1"/>
    <property type="match status" value="1"/>
</dbReference>
<dbReference type="PANTHER" id="PTHR23359">
    <property type="entry name" value="NUCLEOTIDE KINASE"/>
    <property type="match status" value="1"/>
</dbReference>
<dbReference type="Pfam" id="PF00406">
    <property type="entry name" value="ADK"/>
    <property type="match status" value="1"/>
</dbReference>
<dbReference type="PRINTS" id="PR00094">
    <property type="entry name" value="ADENYLTKNASE"/>
</dbReference>
<dbReference type="SUPFAM" id="SSF52540">
    <property type="entry name" value="P-loop containing nucleoside triphosphate hydrolases"/>
    <property type="match status" value="1"/>
</dbReference>
<dbReference type="PROSITE" id="PS00113">
    <property type="entry name" value="ADENYLATE_KINASE"/>
    <property type="match status" value="1"/>
</dbReference>
<protein>
    <recommendedName>
        <fullName evidence="1">Adenylate kinase</fullName>
        <shortName evidence="1">AK</shortName>
        <ecNumber evidence="1">2.7.4.3</ecNumber>
    </recommendedName>
    <alternativeName>
        <fullName evidence="1">ATP-AMP transphosphorylase</fullName>
    </alternativeName>
    <alternativeName>
        <fullName evidence="1">ATP:AMP phosphotransferase</fullName>
    </alternativeName>
    <alternativeName>
        <fullName evidence="1">Adenylate monophosphate kinase</fullName>
    </alternativeName>
</protein>
<evidence type="ECO:0000255" key="1">
    <source>
        <dbReference type="HAMAP-Rule" id="MF_00235"/>
    </source>
</evidence>
<gene>
    <name evidence="1" type="primary">adk</name>
    <name type="ordered locus">BOV_1175</name>
</gene>
<sequence length="194" mass="20836">MRLILLGPPGAGKGTQAGLLTKKHGIPQLSTGDMLRAAVAQQSEIGKRAKAVMDAGQLVSDEIVNQIVSERIDAPDCANGFILDGYPRTVPQAQALSQMLSGKGLKLDAVIELKVDENALVKRMESRVAETIAKGGQVRSDDNPEAFRKRLVEYREKTAPLSSYYAGTGELRVINGMAPVEEVTAEIERILVPA</sequence>
<keyword id="KW-0067">ATP-binding</keyword>
<keyword id="KW-0963">Cytoplasm</keyword>
<keyword id="KW-0418">Kinase</keyword>
<keyword id="KW-0545">Nucleotide biosynthesis</keyword>
<keyword id="KW-0547">Nucleotide-binding</keyword>
<keyword id="KW-0808">Transferase</keyword>
<feature type="chain" id="PRO_1000058793" description="Adenylate kinase">
    <location>
        <begin position="1"/>
        <end position="194"/>
    </location>
</feature>
<feature type="region of interest" description="NMP" evidence="1">
    <location>
        <begin position="30"/>
        <end position="59"/>
    </location>
</feature>
<feature type="region of interest" description="LID" evidence="1">
    <location>
        <begin position="126"/>
        <end position="142"/>
    </location>
</feature>
<feature type="binding site" evidence="1">
    <location>
        <begin position="10"/>
        <end position="15"/>
    </location>
    <ligand>
        <name>ATP</name>
        <dbReference type="ChEBI" id="CHEBI:30616"/>
    </ligand>
</feature>
<feature type="binding site" evidence="1">
    <location>
        <position position="31"/>
    </location>
    <ligand>
        <name>AMP</name>
        <dbReference type="ChEBI" id="CHEBI:456215"/>
    </ligand>
</feature>
<feature type="binding site" evidence="1">
    <location>
        <position position="36"/>
    </location>
    <ligand>
        <name>AMP</name>
        <dbReference type="ChEBI" id="CHEBI:456215"/>
    </ligand>
</feature>
<feature type="binding site" evidence="1">
    <location>
        <begin position="57"/>
        <end position="59"/>
    </location>
    <ligand>
        <name>AMP</name>
        <dbReference type="ChEBI" id="CHEBI:456215"/>
    </ligand>
</feature>
<feature type="binding site" evidence="1">
    <location>
        <begin position="85"/>
        <end position="88"/>
    </location>
    <ligand>
        <name>AMP</name>
        <dbReference type="ChEBI" id="CHEBI:456215"/>
    </ligand>
</feature>
<feature type="binding site" evidence="1">
    <location>
        <position position="92"/>
    </location>
    <ligand>
        <name>AMP</name>
        <dbReference type="ChEBI" id="CHEBI:456215"/>
    </ligand>
</feature>
<feature type="binding site" evidence="1">
    <location>
        <position position="127"/>
    </location>
    <ligand>
        <name>ATP</name>
        <dbReference type="ChEBI" id="CHEBI:30616"/>
    </ligand>
</feature>
<feature type="binding site" evidence="1">
    <location>
        <position position="139"/>
    </location>
    <ligand>
        <name>AMP</name>
        <dbReference type="ChEBI" id="CHEBI:456215"/>
    </ligand>
</feature>
<feature type="binding site" evidence="1">
    <location>
        <position position="150"/>
    </location>
    <ligand>
        <name>AMP</name>
        <dbReference type="ChEBI" id="CHEBI:456215"/>
    </ligand>
</feature>
<feature type="binding site" evidence="1">
    <location>
        <position position="178"/>
    </location>
    <ligand>
        <name>ATP</name>
        <dbReference type="ChEBI" id="CHEBI:30616"/>
    </ligand>
</feature>
<organism>
    <name type="scientific">Brucella ovis (strain ATCC 25840 / 63/290 / NCTC 10512)</name>
    <dbReference type="NCBI Taxonomy" id="444178"/>
    <lineage>
        <taxon>Bacteria</taxon>
        <taxon>Pseudomonadati</taxon>
        <taxon>Pseudomonadota</taxon>
        <taxon>Alphaproteobacteria</taxon>
        <taxon>Hyphomicrobiales</taxon>
        <taxon>Brucellaceae</taxon>
        <taxon>Brucella/Ochrobactrum group</taxon>
        <taxon>Brucella</taxon>
    </lineage>
</organism>